<proteinExistence type="evidence at protein level"/>
<organism>
    <name type="scientific">Rattus norvegicus</name>
    <name type="common">Rat</name>
    <dbReference type="NCBI Taxonomy" id="10116"/>
    <lineage>
        <taxon>Eukaryota</taxon>
        <taxon>Metazoa</taxon>
        <taxon>Chordata</taxon>
        <taxon>Craniata</taxon>
        <taxon>Vertebrata</taxon>
        <taxon>Euteleostomi</taxon>
        <taxon>Mammalia</taxon>
        <taxon>Eutheria</taxon>
        <taxon>Euarchontoglires</taxon>
        <taxon>Glires</taxon>
        <taxon>Rodentia</taxon>
        <taxon>Myomorpha</taxon>
        <taxon>Muroidea</taxon>
        <taxon>Muridae</taxon>
        <taxon>Murinae</taxon>
        <taxon>Rattus</taxon>
    </lineage>
</organism>
<protein>
    <recommendedName>
        <fullName>Retinol dehydrogenase 16</fullName>
        <ecNumber evidence="7">1.1.1.105</ecNumber>
        <ecNumber evidence="3">1.1.1.209</ecNumber>
        <ecNumber evidence="2">1.1.1.315</ecNumber>
        <ecNumber evidence="3">1.1.1.53</ecNumber>
    </recommendedName>
    <alternativeName>
        <fullName>29 kDa protein</fullName>
    </alternativeName>
    <alternativeName>
        <fullName>Retinol dehydrogenase 2</fullName>
    </alternativeName>
    <alternativeName>
        <fullName evidence="8">Retinol dehydrogenase type 1</fullName>
    </alternativeName>
    <alternativeName>
        <fullName evidence="9">Retinol dehydrogenase type II</fullName>
        <shortName evidence="9">RODH II</shortName>
    </alternativeName>
</protein>
<dbReference type="EC" id="1.1.1.105" evidence="7"/>
<dbReference type="EC" id="1.1.1.209" evidence="3"/>
<dbReference type="EC" id="1.1.1.315" evidence="2"/>
<dbReference type="EC" id="1.1.1.53" evidence="3"/>
<dbReference type="EMBL" id="U33500">
    <property type="protein sequence ID" value="AAC52316.1"/>
    <property type="molecule type" value="mRNA"/>
</dbReference>
<dbReference type="EMBL" id="BC079153">
    <property type="protein sequence ID" value="AAH79153.1"/>
    <property type="molecule type" value="mRNA"/>
</dbReference>
<dbReference type="PIR" id="I55462">
    <property type="entry name" value="I55462"/>
</dbReference>
<dbReference type="RefSeq" id="NP_954678.1">
    <property type="nucleotide sequence ID" value="NM_199208.2"/>
</dbReference>
<dbReference type="SMR" id="P50170"/>
<dbReference type="FunCoup" id="P50170">
    <property type="interactions" value="20"/>
</dbReference>
<dbReference type="STRING" id="10116.ENSRNOP00000039311"/>
<dbReference type="PhosphoSitePlus" id="P50170"/>
<dbReference type="PaxDb" id="10116-ENSRNOP00000039311"/>
<dbReference type="Ensembl" id="ENSRNOT00000097465.1">
    <property type="protein sequence ID" value="ENSRNOP00000088842.1"/>
    <property type="gene ID" value="ENSRNOG00000029651.7"/>
</dbReference>
<dbReference type="GeneID" id="299511"/>
<dbReference type="KEGG" id="rno:299511"/>
<dbReference type="UCSC" id="RGD:735050">
    <property type="organism name" value="rat"/>
</dbReference>
<dbReference type="AGR" id="RGD:735050"/>
<dbReference type="CTD" id="8608"/>
<dbReference type="RGD" id="735050">
    <property type="gene designation" value="Rdh16"/>
</dbReference>
<dbReference type="eggNOG" id="KOG1610">
    <property type="taxonomic scope" value="Eukaryota"/>
</dbReference>
<dbReference type="GeneTree" id="ENSGT00940000154118"/>
<dbReference type="InParanoid" id="P50170"/>
<dbReference type="OrthoDB" id="5296at2759"/>
<dbReference type="PhylomeDB" id="P50170"/>
<dbReference type="BRENDA" id="1.1.1.53">
    <property type="organism ID" value="5301"/>
</dbReference>
<dbReference type="UniPathway" id="UPA00912"/>
<dbReference type="PRO" id="PR:P50170"/>
<dbReference type="Proteomes" id="UP000002494">
    <property type="component" value="Chromosome 7"/>
</dbReference>
<dbReference type="GO" id="GO:0005789">
    <property type="term" value="C:endoplasmic reticulum membrane"/>
    <property type="evidence" value="ECO:0000314"/>
    <property type="project" value="UniProtKB"/>
</dbReference>
<dbReference type="GO" id="GO:0043231">
    <property type="term" value="C:intracellular membrane-bounded organelle"/>
    <property type="evidence" value="ECO:0000266"/>
    <property type="project" value="RGD"/>
</dbReference>
<dbReference type="GO" id="GO:0031090">
    <property type="term" value="C:organelle membrane"/>
    <property type="evidence" value="ECO:0000314"/>
    <property type="project" value="UniProtKB"/>
</dbReference>
<dbReference type="GO" id="GO:0106429">
    <property type="term" value="F:11-cis-retinol dehydrogenase"/>
    <property type="evidence" value="ECO:0007669"/>
    <property type="project" value="UniProtKB-EC"/>
</dbReference>
<dbReference type="GO" id="GO:0004745">
    <property type="term" value="F:all-trans-retinol dehydrogenase (NAD+) activity"/>
    <property type="evidence" value="ECO:0000314"/>
    <property type="project" value="RGD"/>
</dbReference>
<dbReference type="GO" id="GO:0047044">
    <property type="term" value="F:androstan-3-alpha,17-beta-diol dehydrogenase (NAD+) activity"/>
    <property type="evidence" value="ECO:0000250"/>
    <property type="project" value="UniProtKB"/>
</dbReference>
<dbReference type="GO" id="GO:0047023">
    <property type="term" value="F:androsterone dehydrogenase [NAD(P)+] activity"/>
    <property type="evidence" value="ECO:0000250"/>
    <property type="project" value="UniProtKB"/>
</dbReference>
<dbReference type="GO" id="GO:0042802">
    <property type="term" value="F:identical protein binding"/>
    <property type="evidence" value="ECO:0000250"/>
    <property type="project" value="UniProtKB"/>
</dbReference>
<dbReference type="GO" id="GO:1900054">
    <property type="term" value="P:positive regulation of retinoic acid biosynthetic process"/>
    <property type="evidence" value="ECO:0000315"/>
    <property type="project" value="RGD"/>
</dbReference>
<dbReference type="GO" id="GO:0042573">
    <property type="term" value="P:retinoic acid metabolic process"/>
    <property type="evidence" value="ECO:0000314"/>
    <property type="project" value="RGD"/>
</dbReference>
<dbReference type="GO" id="GO:0042572">
    <property type="term" value="P:retinol metabolic process"/>
    <property type="evidence" value="ECO:0000314"/>
    <property type="project" value="RGD"/>
</dbReference>
<dbReference type="GO" id="GO:0008202">
    <property type="term" value="P:steroid metabolic process"/>
    <property type="evidence" value="ECO:0000250"/>
    <property type="project" value="UniProtKB"/>
</dbReference>
<dbReference type="CDD" id="cd09805">
    <property type="entry name" value="type2_17beta_HSD-like_SDR_c"/>
    <property type="match status" value="1"/>
</dbReference>
<dbReference type="FunFam" id="3.40.50.720:FF:000074">
    <property type="entry name" value="Retinol dehydrogenase type 1"/>
    <property type="match status" value="1"/>
</dbReference>
<dbReference type="Gene3D" id="3.40.50.720">
    <property type="entry name" value="NAD(P)-binding Rossmann-like Domain"/>
    <property type="match status" value="1"/>
</dbReference>
<dbReference type="InterPro" id="IPR036291">
    <property type="entry name" value="NAD(P)-bd_dom_sf"/>
</dbReference>
<dbReference type="InterPro" id="IPR020904">
    <property type="entry name" value="Sc_DH/Rdtase_CS"/>
</dbReference>
<dbReference type="InterPro" id="IPR002347">
    <property type="entry name" value="SDR_fam"/>
</dbReference>
<dbReference type="PANTHER" id="PTHR43313:SF14">
    <property type="entry name" value="CIS-RETINOL_3ALPHA HYDROXYSTEROL SHORT-CHAIN DEHYDROGENASE-LIKE PROTEIN-RELATED"/>
    <property type="match status" value="1"/>
</dbReference>
<dbReference type="PANTHER" id="PTHR43313">
    <property type="entry name" value="SHORT-CHAIN DEHYDROGENASE/REDUCTASE FAMILY 9C"/>
    <property type="match status" value="1"/>
</dbReference>
<dbReference type="Pfam" id="PF00106">
    <property type="entry name" value="adh_short"/>
    <property type="match status" value="1"/>
</dbReference>
<dbReference type="PRINTS" id="PR00081">
    <property type="entry name" value="GDHRDH"/>
</dbReference>
<dbReference type="PRINTS" id="PR00080">
    <property type="entry name" value="SDRFAMILY"/>
</dbReference>
<dbReference type="SUPFAM" id="SSF51735">
    <property type="entry name" value="NAD(P)-binding Rossmann-fold domains"/>
    <property type="match status" value="1"/>
</dbReference>
<dbReference type="PROSITE" id="PS00061">
    <property type="entry name" value="ADH_SHORT"/>
    <property type="match status" value="1"/>
</dbReference>
<comment type="function">
    <text evidence="3 7">Oxidoreductase with a preference for NAD. Oxidizes all-trans-retinol, 9-cis-retinol, 11-cis-retinol and 13-cis-retinol to the corresponding aldehydes (PubMed:7499345). Has higher activity towards CRBP-bound retinol than with free retinol (By similarity). Oxidizes 3-alpha-hydroxysteroids. Oxidizes androstanediol and androsterone to dihydrotestosterone and androstanedione. Can also catalyze the reverse reaction (By similarity).</text>
</comment>
<comment type="catalytic activity">
    <reaction evidence="7">
        <text>all-trans-retinol--[retinol-binding protein] + NAD(+) = all-trans-retinal--[retinol-binding protein] + NADH + H(+)</text>
        <dbReference type="Rhea" id="RHEA:48488"/>
        <dbReference type="Rhea" id="RHEA-COMP:14428"/>
        <dbReference type="Rhea" id="RHEA-COMP:14430"/>
        <dbReference type="ChEBI" id="CHEBI:15378"/>
        <dbReference type="ChEBI" id="CHEBI:17336"/>
        <dbReference type="ChEBI" id="CHEBI:17898"/>
        <dbReference type="ChEBI" id="CHEBI:57540"/>
        <dbReference type="ChEBI" id="CHEBI:57945"/>
        <dbReference type="ChEBI" id="CHEBI:83228"/>
        <dbReference type="EC" id="1.1.1.105"/>
    </reaction>
</comment>
<comment type="catalytic activity">
    <reaction evidence="3">
        <text>all-trans-retinol + NAD(+) = all-trans-retinal + NADH + H(+)</text>
        <dbReference type="Rhea" id="RHEA:21284"/>
        <dbReference type="ChEBI" id="CHEBI:15378"/>
        <dbReference type="ChEBI" id="CHEBI:17336"/>
        <dbReference type="ChEBI" id="CHEBI:17898"/>
        <dbReference type="ChEBI" id="CHEBI:57540"/>
        <dbReference type="ChEBI" id="CHEBI:57945"/>
        <dbReference type="EC" id="1.1.1.105"/>
    </reaction>
</comment>
<comment type="catalytic activity">
    <reaction evidence="3">
        <text>13-cis-retinol + NAD(+) = 13-cis-retinal + NADH + H(+)</text>
        <dbReference type="Rhea" id="RHEA:42056"/>
        <dbReference type="ChEBI" id="CHEBI:15378"/>
        <dbReference type="ChEBI" id="CHEBI:45479"/>
        <dbReference type="ChEBI" id="CHEBI:45487"/>
        <dbReference type="ChEBI" id="CHEBI:57540"/>
        <dbReference type="ChEBI" id="CHEBI:57945"/>
    </reaction>
</comment>
<comment type="catalytic activity">
    <reaction evidence="2">
        <text>11-cis-retinol + NAD(+) = 11-cis-retinal + NADH + H(+)</text>
        <dbReference type="Rhea" id="RHEA:42060"/>
        <dbReference type="ChEBI" id="CHEBI:15378"/>
        <dbReference type="ChEBI" id="CHEBI:16066"/>
        <dbReference type="ChEBI" id="CHEBI:16302"/>
        <dbReference type="ChEBI" id="CHEBI:57540"/>
        <dbReference type="ChEBI" id="CHEBI:57945"/>
        <dbReference type="EC" id="1.1.1.315"/>
    </reaction>
</comment>
<comment type="catalytic activity">
    <reaction evidence="2">
        <text>9-cis-retinol + NAD(+) = 9-cis-retinal + NADH + H(+)</text>
        <dbReference type="Rhea" id="RHEA:42052"/>
        <dbReference type="ChEBI" id="CHEBI:15378"/>
        <dbReference type="ChEBI" id="CHEBI:57540"/>
        <dbReference type="ChEBI" id="CHEBI:57945"/>
        <dbReference type="ChEBI" id="CHEBI:78272"/>
        <dbReference type="ChEBI" id="CHEBI:78273"/>
    </reaction>
</comment>
<comment type="catalytic activity">
    <reaction evidence="3">
        <text>5alpha-androstane-3alpha,17beta-diol + NAD(+) = 17beta-hydroxy-5alpha-androstan-3-one + NADH + H(+)</text>
        <dbReference type="Rhea" id="RHEA:42004"/>
        <dbReference type="ChEBI" id="CHEBI:15378"/>
        <dbReference type="ChEBI" id="CHEBI:16330"/>
        <dbReference type="ChEBI" id="CHEBI:36713"/>
        <dbReference type="ChEBI" id="CHEBI:57540"/>
        <dbReference type="ChEBI" id="CHEBI:57945"/>
        <dbReference type="EC" id="1.1.1.53"/>
    </reaction>
</comment>
<comment type="catalytic activity">
    <reaction evidence="3">
        <text>androsterone + NAD(+) = 5alpha-androstan-3,17-dione + NADH + H(+)</text>
        <dbReference type="Rhea" id="RHEA:20381"/>
        <dbReference type="ChEBI" id="CHEBI:15378"/>
        <dbReference type="ChEBI" id="CHEBI:15994"/>
        <dbReference type="ChEBI" id="CHEBI:16032"/>
        <dbReference type="ChEBI" id="CHEBI:57540"/>
        <dbReference type="ChEBI" id="CHEBI:57945"/>
        <dbReference type="EC" id="1.1.1.209"/>
    </reaction>
</comment>
<comment type="pathway">
    <text evidence="7">Cofactor metabolism; retinol metabolism.</text>
</comment>
<comment type="subunit">
    <text evidence="2">Homodimer.</text>
</comment>
<comment type="subcellular location">
    <subcellularLocation>
        <location evidence="6">Microsome membrane</location>
    </subcellularLocation>
    <subcellularLocation>
        <location evidence="6">Endoplasmic reticulum membrane</location>
        <topology evidence="4">Single-pass membrane protein</topology>
    </subcellularLocation>
</comment>
<comment type="tissue specificity">
    <text evidence="7">Liver &gt; kidney &gt; brain &gt; lung &gt; testis.</text>
</comment>
<comment type="domain">
    <text evidence="2">The C-terminal region plays a crucial role in controlling the activity of RDH16 and its required for endoplasmic reticulum (ER) retention.</text>
</comment>
<comment type="PTM">
    <text evidence="6">Not N-glycosylated.</text>
</comment>
<comment type="similarity">
    <text evidence="10">Belongs to the short-chain dehydrogenases/reductases (SDR) family.</text>
</comment>
<comment type="caution">
    <text evidence="2 6 10">Membrane topology is controversial (PubMed:11601977). Membrane topology structure with endoplasmic reticulum lumen orientation of the catalytic domains while the C-terminus is in the cytosol have been suggested by one study (By similarity). Others investigators have argued for a reverse orientation, with a membrane-embedded N-terminal domain but no C-terminal transmembrane segment, and a cytosolic orientation of the catalytic domain (PubMed:11601977). These contracductoty results are probably because of differences in the assay systems.</text>
</comment>
<gene>
    <name evidence="11" type="primary">Rdh16</name>
    <name type="synonym">Rdh2</name>
    <name evidence="8" type="synonym">Rodh1</name>
    <name type="synonym">Rodhii</name>
</gene>
<evidence type="ECO:0000250" key="1"/>
<evidence type="ECO:0000250" key="2">
    <source>
        <dbReference type="UniProtKB" id="O54909"/>
    </source>
</evidence>
<evidence type="ECO:0000250" key="3">
    <source>
        <dbReference type="UniProtKB" id="O75452"/>
    </source>
</evidence>
<evidence type="ECO:0000255" key="4"/>
<evidence type="ECO:0000255" key="5">
    <source>
        <dbReference type="PROSITE-ProRule" id="PRU10001"/>
    </source>
</evidence>
<evidence type="ECO:0000269" key="6">
    <source>
    </source>
</evidence>
<evidence type="ECO:0000269" key="7">
    <source>
    </source>
</evidence>
<evidence type="ECO:0000303" key="8">
    <source>
    </source>
</evidence>
<evidence type="ECO:0000303" key="9">
    <source>
    </source>
</evidence>
<evidence type="ECO:0000305" key="10"/>
<evidence type="ECO:0000312" key="11">
    <source>
        <dbReference type="RGD" id="735050"/>
    </source>
</evidence>
<accession>P50170</accession>
<sequence>MWLYLLALVGLWNLLRLFRERKVVSHLQDKYVFITGCDSGFGNLLARQLDRRGMRVLAACLTEKGAEQLRSKTSDRLETVILDVTKTESIVAATQWVKERVGNTGLWGLVNNAGISGHLGPNEWMNKQNIASVLDVNLLGMIEVTLSTVPLVRKARGRVVNVASIAGRLSFCGGGYCISKYGVEAFSDSLRRELSYFGVKVAIVEPGFFRTDVTNGVTLSSNFQMLWDQTSSEVREVYGENYLASYLKMLNGLDQRCNKDLSLVTDCMEHALTSCHPRTRYSAGWDAKFFYLPMSYLPTFLVDALFYWTSPKPEKAL</sequence>
<keyword id="KW-0903">Direct protein sequencing</keyword>
<keyword id="KW-0256">Endoplasmic reticulum</keyword>
<keyword id="KW-0443">Lipid metabolism</keyword>
<keyword id="KW-0472">Membrane</keyword>
<keyword id="KW-0492">Microsome</keyword>
<keyword id="KW-0520">NAD</keyword>
<keyword id="KW-0560">Oxidoreductase</keyword>
<keyword id="KW-1185">Reference proteome</keyword>
<keyword id="KW-0753">Steroid metabolism</keyword>
<keyword id="KW-0812">Transmembrane</keyword>
<keyword id="KW-1133">Transmembrane helix</keyword>
<name>RDH16_RAT</name>
<reference key="1">
    <citation type="journal article" date="1995" name="J. Biol. Chem.">
        <title>Cloning of a cDNA for a second retinol dehydrogenase type II. Expression of its mRNA relative to type I.</title>
        <authorList>
            <person name="Chai X."/>
            <person name="Zhai Y."/>
            <person name="Popescu G."/>
            <person name="Napoli J.L."/>
        </authorList>
    </citation>
    <scope>NUCLEOTIDE SEQUENCE [MRNA]</scope>
    <scope>TISSUE SPECIFICITY</scope>
    <scope>CATALYTIC ACTIVITY</scope>
    <source>
        <tissue>Liver</tissue>
    </source>
</reference>
<reference key="2">
    <citation type="journal article" date="2004" name="Genome Res.">
        <title>The status, quality, and expansion of the NIH full-length cDNA project: the Mammalian Gene Collection (MGC).</title>
        <authorList>
            <consortium name="The MGC Project Team"/>
        </authorList>
    </citation>
    <scope>NUCLEOTIDE SEQUENCE [LARGE SCALE MRNA]</scope>
    <source>
        <tissue>Kidney</tissue>
    </source>
</reference>
<reference key="3">
    <citation type="journal article" date="1993" name="Biochim. Biophys. Acta">
        <title>Characterization of two P-450 isozymes placed in the rat CYP2D subfamily.</title>
        <authorList>
            <person name="Ohishi N."/>
            <person name="Imaoka S."/>
            <person name="Suzuki T."/>
            <person name="Funae Y."/>
        </authorList>
    </citation>
    <scope>PROTEIN SEQUENCE OF 1-10</scope>
    <source>
        <tissue>Liver</tissue>
    </source>
</reference>
<reference key="4">
    <citation type="journal article" date="2001" name="Biochemistry">
        <title>The N-terminus of retinol dehydrogenase type 1 signals cytosolic orientation in the microsomal membrane.</title>
        <authorList>
            <person name="Wang J."/>
            <person name="Bongianni J.K."/>
            <person name="Napoli J.L."/>
        </authorList>
    </citation>
    <scope>SUBCELLULAR LOCATION</scope>
    <scope>TOPOLOGY</scope>
    <scope>CAUTION</scope>
</reference>
<feature type="chain" id="PRO_0000054759" description="Retinol dehydrogenase 16">
    <location>
        <begin position="1"/>
        <end position="317"/>
    </location>
</feature>
<feature type="transmembrane region" description="Helical" evidence="4">
    <location>
        <begin position="289"/>
        <end position="308"/>
    </location>
</feature>
<feature type="active site" description="Proton acceptor" evidence="5">
    <location>
        <position position="176"/>
    </location>
</feature>
<feature type="binding site" evidence="1">
    <location>
        <begin position="33"/>
        <end position="57"/>
    </location>
    <ligand>
        <name>NAD(+)</name>
        <dbReference type="ChEBI" id="CHEBI:57540"/>
    </ligand>
</feature>
<feature type="binding site" evidence="1">
    <location>
        <position position="164"/>
    </location>
    <ligand>
        <name>substrate</name>
    </ligand>
</feature>